<dbReference type="EC" id="3.2.1.18" evidence="1"/>
<dbReference type="EMBL" id="CY007621">
    <property type="protein sequence ID" value="ABC46568.1"/>
    <property type="molecule type" value="Genomic_RNA"/>
</dbReference>
<dbReference type="SMR" id="Q2RCH3"/>
<dbReference type="CAZy" id="GH34">
    <property type="family name" value="Glycoside Hydrolase Family 34"/>
</dbReference>
<dbReference type="GlyCosmos" id="Q2RCH3">
    <property type="glycosylation" value="7 sites, No reported glycans"/>
</dbReference>
<dbReference type="PRO" id="PR:Q2RCH3"/>
<dbReference type="Proteomes" id="UP000008577">
    <property type="component" value="Genome"/>
</dbReference>
<dbReference type="GO" id="GO:0020002">
    <property type="term" value="C:host cell plasma membrane"/>
    <property type="evidence" value="ECO:0007669"/>
    <property type="project" value="UniProtKB-SubCell"/>
</dbReference>
<dbReference type="GO" id="GO:0016020">
    <property type="term" value="C:membrane"/>
    <property type="evidence" value="ECO:0007669"/>
    <property type="project" value="UniProtKB-UniRule"/>
</dbReference>
<dbReference type="GO" id="GO:0055036">
    <property type="term" value="C:virion membrane"/>
    <property type="evidence" value="ECO:0007669"/>
    <property type="project" value="UniProtKB-SubCell"/>
</dbReference>
<dbReference type="GO" id="GO:0004308">
    <property type="term" value="F:exo-alpha-sialidase activity"/>
    <property type="evidence" value="ECO:0007669"/>
    <property type="project" value="UniProtKB-UniRule"/>
</dbReference>
<dbReference type="GO" id="GO:0046872">
    <property type="term" value="F:metal ion binding"/>
    <property type="evidence" value="ECO:0007669"/>
    <property type="project" value="UniProtKB-UniRule"/>
</dbReference>
<dbReference type="GO" id="GO:0005975">
    <property type="term" value="P:carbohydrate metabolic process"/>
    <property type="evidence" value="ECO:0007669"/>
    <property type="project" value="InterPro"/>
</dbReference>
<dbReference type="GO" id="GO:0046761">
    <property type="term" value="P:viral budding from plasma membrane"/>
    <property type="evidence" value="ECO:0007669"/>
    <property type="project" value="UniProtKB-UniRule"/>
</dbReference>
<dbReference type="CDD" id="cd15483">
    <property type="entry name" value="Influenza_NA"/>
    <property type="match status" value="1"/>
</dbReference>
<dbReference type="Gene3D" id="2.120.10.10">
    <property type="match status" value="1"/>
</dbReference>
<dbReference type="HAMAP" id="MF_04071">
    <property type="entry name" value="INFV_NRAM"/>
    <property type="match status" value="1"/>
</dbReference>
<dbReference type="InterPro" id="IPR001860">
    <property type="entry name" value="Glyco_hydro_34"/>
</dbReference>
<dbReference type="InterPro" id="IPR033654">
    <property type="entry name" value="Sialidase_Influenza_A/B"/>
</dbReference>
<dbReference type="InterPro" id="IPR036278">
    <property type="entry name" value="Sialidase_sf"/>
</dbReference>
<dbReference type="Pfam" id="PF00064">
    <property type="entry name" value="Neur"/>
    <property type="match status" value="1"/>
</dbReference>
<dbReference type="SUPFAM" id="SSF50939">
    <property type="entry name" value="Sialidases"/>
    <property type="match status" value="1"/>
</dbReference>
<evidence type="ECO:0000255" key="1">
    <source>
        <dbReference type="HAMAP-Rule" id="MF_04071"/>
    </source>
</evidence>
<reference key="1">
    <citation type="submission" date="2005-12" db="EMBL/GenBank/DDBJ databases">
        <title>The NIAID influenza genome sequencing project.</title>
        <authorList>
            <person name="Ghedin E."/>
            <person name="Spiro D."/>
            <person name="Miller N."/>
            <person name="Zaborsky J."/>
            <person name="Feldblyum T."/>
            <person name="Subbu V."/>
            <person name="Shumway M."/>
            <person name="Sparenborg J."/>
            <person name="Groveman L."/>
            <person name="Halpin R."/>
            <person name="Sitz J."/>
            <person name="Koo H."/>
            <person name="Salzberg S.L."/>
            <person name="Webster R.G."/>
            <person name="Hoffmann E."/>
            <person name="Krauss S."/>
            <person name="Naeve C."/>
            <person name="Bao Y."/>
            <person name="Bolotov P."/>
            <person name="Dernovoy D."/>
            <person name="Kiryutin B."/>
            <person name="Lipman D.J."/>
            <person name="Tatusova T."/>
        </authorList>
    </citation>
    <scope>NUCLEOTIDE SEQUENCE [GENOMIC RNA]</scope>
</reference>
<reference key="2">
    <citation type="journal article" date="2004" name="Virus Res.">
        <title>Assembly and budding of influenza virus.</title>
        <authorList>
            <person name="Nayak D.P."/>
            <person name="Hui E.K."/>
            <person name="Barman S."/>
        </authorList>
    </citation>
    <scope>REVIEW</scope>
</reference>
<reference key="3">
    <citation type="journal article" date="2005" name="N. Engl. J. Med.">
        <title>Neuraminidase inhibitors for influenza.</title>
        <authorList>
            <person name="Moscona A."/>
        </authorList>
    </citation>
    <scope>REVIEW</scope>
</reference>
<reference key="4">
    <citation type="journal article" date="2005" name="Biol. Pharm. Bull.">
        <title>Sialobiology of influenza: molecular mechanism of host range variation of influenza viruses.</title>
        <authorList>
            <person name="Suzuki Y."/>
        </authorList>
    </citation>
    <scope>REVIEW</scope>
</reference>
<keyword id="KW-0106">Calcium</keyword>
<keyword id="KW-1015">Disulfide bond</keyword>
<keyword id="KW-0325">Glycoprotein</keyword>
<keyword id="KW-0326">Glycosidase</keyword>
<keyword id="KW-1032">Host cell membrane</keyword>
<keyword id="KW-1043">Host membrane</keyword>
<keyword id="KW-0378">Hydrolase</keyword>
<keyword id="KW-0472">Membrane</keyword>
<keyword id="KW-0479">Metal-binding</keyword>
<keyword id="KW-0735">Signal-anchor</keyword>
<keyword id="KW-0812">Transmembrane</keyword>
<keyword id="KW-1133">Transmembrane helix</keyword>
<keyword id="KW-0946">Virion</keyword>
<name>NRAM_I80A4</name>
<protein>
    <recommendedName>
        <fullName evidence="1">Neuraminidase</fullName>
        <ecNumber evidence="1">3.2.1.18</ecNumber>
    </recommendedName>
</protein>
<organism>
    <name type="scientific">Influenza A virus (strain A/Memphis/4/1980 H3N2)</name>
    <dbReference type="NCBI Taxonomy" id="383578"/>
    <lineage>
        <taxon>Viruses</taxon>
        <taxon>Riboviria</taxon>
        <taxon>Orthornavirae</taxon>
        <taxon>Negarnaviricota</taxon>
        <taxon>Polyploviricotina</taxon>
        <taxon>Insthoviricetes</taxon>
        <taxon>Articulavirales</taxon>
        <taxon>Orthomyxoviridae</taxon>
        <taxon>Alphainfluenzavirus</taxon>
        <taxon>Alphainfluenzavirus influenzae</taxon>
        <taxon>Influenza A virus</taxon>
    </lineage>
</organism>
<gene>
    <name evidence="1" type="primary">NA</name>
</gene>
<organismHost>
    <name type="scientific">Aves</name>
    <dbReference type="NCBI Taxonomy" id="8782"/>
</organismHost>
<organismHost>
    <name type="scientific">Cetacea</name>
    <name type="common">whales</name>
    <dbReference type="NCBI Taxonomy" id="9721"/>
</organismHost>
<organismHost>
    <name type="scientific">Homo sapiens</name>
    <name type="common">Human</name>
    <dbReference type="NCBI Taxonomy" id="9606"/>
</organismHost>
<organismHost>
    <name type="scientific">Phocidae</name>
    <name type="common">true seals</name>
    <dbReference type="NCBI Taxonomy" id="9709"/>
</organismHost>
<organismHost>
    <name type="scientific">Sus scrofa</name>
    <name type="common">Pig</name>
    <dbReference type="NCBI Taxonomy" id="9823"/>
</organismHost>
<comment type="function">
    <text evidence="1">Catalyzes the removal of terminal sialic acid residues from viral and cellular glycoconjugates. Cleaves off the terminal sialic acids on the glycosylated HA during virus budding to facilitate virus release. Additionally helps virus spread through the circulation by further removing sialic acids from the cell surface. These cleavages prevent self-aggregation and ensure the efficient spread of the progeny virus from cell to cell. Otherwise, infection would be limited to one round of replication. Described as a receptor-destroying enzyme because it cleaves a terminal sialic acid from the cellular receptors. May facilitate viral invasion of the upper airways by cleaving the sialic acid moieties on the mucin of the airway epithelial cells. Likely to plays a role in the budding process through its association with lipid rafts during intracellular transport. May additionally display a raft-association independent effect on budding. Plays a role in the determination of host range restriction on replication and virulence. Sialidase activity in late endosome/lysosome traffic seems to enhance virus replication.</text>
</comment>
<comment type="catalytic activity">
    <reaction evidence="1">
        <text>Hydrolysis of alpha-(2-&gt;3)-, alpha-(2-&gt;6)-, alpha-(2-&gt;8)- glycosidic linkages of terminal sialic acid residues in oligosaccharides, glycoproteins, glycolipids, colominic acid and synthetic substrates.</text>
        <dbReference type="EC" id="3.2.1.18"/>
    </reaction>
</comment>
<comment type="cofactor">
    <cofactor evidence="1">
        <name>Ca(2+)</name>
        <dbReference type="ChEBI" id="CHEBI:29108"/>
    </cofactor>
</comment>
<comment type="activity regulation">
    <text evidence="1">Inhibited by the neuraminidase inhibitors zanamivir (Relenza) and oseltamivir (Tamiflu). These drugs interfere with the release of progeny virus from infected cells and are effective against all influenza strains. Resistance to neuraminidase inhibitors is quite rare.</text>
</comment>
<comment type="subunit">
    <text evidence="1">Homotetramer.</text>
</comment>
<comment type="subcellular location">
    <subcellularLocation>
        <location evidence="1">Virion membrane</location>
    </subcellularLocation>
    <subcellularLocation>
        <location evidence="1">Host apical cell membrane</location>
        <topology evidence="1">Single-pass type II membrane protein</topology>
    </subcellularLocation>
    <text evidence="1">Preferentially accumulates at the apical plasma membrane in infected polarized epithelial cells, which is the virus assembly site. Uses lipid rafts for cell surface transport and apical sorting. In the virion, forms a mushroom-shaped spike on the surface of the membrane.</text>
</comment>
<comment type="domain">
    <text evidence="1">Intact N-terminus is essential for virion morphogenesis. Possesses two apical sorting signals, one in the ectodomain, which is likely to be a glycan, and the other in the transmembrane domain. The transmembrane domain also plays a role in lipid raft association.</text>
</comment>
<comment type="PTM">
    <text evidence="1">N-glycosylated.</text>
</comment>
<comment type="miscellaneous">
    <text>The influenza A genome consist of 8 RNA segments. Genetic variation of hemagglutinin and/or neuraminidase genes results in the emergence of new influenza strains. The mechanism of variation can be the result of point mutations or the result of genetic reassortment between segments of two different strains.</text>
</comment>
<comment type="similarity">
    <text evidence="1">Belongs to the glycosyl hydrolase 34 family.</text>
</comment>
<sequence length="469" mass="52187">MNPNQKIITIGSVSLTIATICFLMQIAILVTTVTLHFKQYECSSPPNNQVMPCEPIIIERNITEIVYLTNTTIEKEICPKLVEYRNWSKPQCKITGFAPFSKDNSIRLSAGGDIWVTREPYVSCDPGKCYQFALGQGTTLDNKHSNDTIHDRTPYRTLLMNELGVPFHLGTRQVCIAWSSSSCHDGKAWLHVCVTGHDKNATASFIYDGRLVDSIGSWSKNILRTQESECVCINGTCTVVMTDGSASERADTKILFIEEGKIVHISPLSGSAQHVEECSCYPRYPGVRCVCRDNWKGSNRPVVDINVKDYSIVSSYVCSGLVGDTPRKNDRSSSSYCRNPNNEKGNHGVKGWAFDDGNDVWMGRTISEESRSGYETFKVIGGWSTPNSKLQINRQVIVDSDNRSGYSGIFSVEGKSCINRCFYVELIRGREQETRVWWTSNSIVVFCGTSGTYGTGSWPDGADINLMPI</sequence>
<feature type="chain" id="PRO_0000280142" description="Neuraminidase">
    <location>
        <begin position="1"/>
        <end position="469"/>
    </location>
</feature>
<feature type="topological domain" description="Intravirion" evidence="1">
    <location>
        <begin position="1"/>
        <end position="9"/>
    </location>
</feature>
<feature type="transmembrane region" description="Helical" evidence="1">
    <location>
        <begin position="10"/>
        <end position="30"/>
    </location>
</feature>
<feature type="topological domain" description="Virion surface" evidence="1">
    <location>
        <begin position="31"/>
        <end position="469"/>
    </location>
</feature>
<feature type="region of interest" description="Involved in apical transport and lipid raft association" evidence="1">
    <location>
        <begin position="11"/>
        <end position="33"/>
    </location>
</feature>
<feature type="region of interest" description="Hypervariable stalk region" evidence="1">
    <location>
        <begin position="36"/>
        <end position="88"/>
    </location>
</feature>
<feature type="region of interest" description="Head of neuraminidase" evidence="1">
    <location>
        <begin position="91"/>
        <end position="469"/>
    </location>
</feature>
<feature type="active site" description="Proton donor/acceptor" evidence="1">
    <location>
        <position position="151"/>
    </location>
</feature>
<feature type="active site" description="Nucleophile" evidence="1">
    <location>
        <position position="406"/>
    </location>
</feature>
<feature type="binding site" evidence="1">
    <location>
        <position position="118"/>
    </location>
    <ligand>
        <name>substrate</name>
    </ligand>
</feature>
<feature type="binding site" evidence="1">
    <location>
        <position position="152"/>
    </location>
    <ligand>
        <name>substrate</name>
    </ligand>
</feature>
<feature type="binding site" evidence="1">
    <location>
        <begin position="276"/>
        <end position="277"/>
    </location>
    <ligand>
        <name>substrate</name>
    </ligand>
</feature>
<feature type="binding site" evidence="1">
    <location>
        <position position="292"/>
    </location>
    <ligand>
        <name>substrate</name>
    </ligand>
</feature>
<feature type="binding site" evidence="1">
    <location>
        <position position="293"/>
    </location>
    <ligand>
        <name>Ca(2+)</name>
        <dbReference type="ChEBI" id="CHEBI:29108"/>
    </ligand>
</feature>
<feature type="binding site" evidence="1">
    <location>
        <position position="297"/>
    </location>
    <ligand>
        <name>Ca(2+)</name>
        <dbReference type="ChEBI" id="CHEBI:29108"/>
    </ligand>
</feature>
<feature type="binding site" evidence="1">
    <location>
        <position position="324"/>
    </location>
    <ligand>
        <name>Ca(2+)</name>
        <dbReference type="ChEBI" id="CHEBI:29108"/>
    </ligand>
</feature>
<feature type="binding site" evidence="1">
    <location>
        <position position="371"/>
    </location>
    <ligand>
        <name>substrate</name>
    </ligand>
</feature>
<feature type="glycosylation site" description="N-linked (GlcNAc...) asparagine; by host" evidence="1">
    <location>
        <position position="61"/>
    </location>
</feature>
<feature type="glycosylation site" description="N-linked (GlcNAc...) asparagine; by host" evidence="1">
    <location>
        <position position="70"/>
    </location>
</feature>
<feature type="glycosylation site" description="N-linked (GlcNAc...) asparagine; by host" evidence="1">
    <location>
        <position position="86"/>
    </location>
</feature>
<feature type="glycosylation site" description="N-linked (GlcNAc...) asparagine; by host" evidence="1">
    <location>
        <position position="146"/>
    </location>
</feature>
<feature type="glycosylation site" description="N-linked (GlcNAc...) asparagine; by host" evidence="1">
    <location>
        <position position="200"/>
    </location>
</feature>
<feature type="glycosylation site" description="N-linked (GlcNAc...) asparagine; by host" evidence="1">
    <location>
        <position position="234"/>
    </location>
</feature>
<feature type="glycosylation site" description="N-linked (GlcNAc...) asparagine; by host" evidence="1">
    <location>
        <position position="402"/>
    </location>
</feature>
<feature type="disulfide bond" evidence="1">
    <location>
        <begin position="92"/>
        <end position="417"/>
    </location>
</feature>
<feature type="disulfide bond" evidence="1">
    <location>
        <begin position="124"/>
        <end position="129"/>
    </location>
</feature>
<feature type="disulfide bond" evidence="1">
    <location>
        <begin position="183"/>
        <end position="230"/>
    </location>
</feature>
<feature type="disulfide bond" evidence="1">
    <location>
        <begin position="232"/>
        <end position="237"/>
    </location>
</feature>
<feature type="disulfide bond" evidence="1">
    <location>
        <begin position="278"/>
        <end position="291"/>
    </location>
</feature>
<feature type="disulfide bond" evidence="1">
    <location>
        <begin position="280"/>
        <end position="289"/>
    </location>
</feature>
<feature type="disulfide bond" evidence="1">
    <location>
        <begin position="318"/>
        <end position="337"/>
    </location>
</feature>
<feature type="disulfide bond" evidence="1">
    <location>
        <begin position="421"/>
        <end position="447"/>
    </location>
</feature>
<proteinExistence type="inferred from homology"/>
<accession>Q2RCH3</accession>